<reference key="1">
    <citation type="submission" date="2000-05" db="UniProtKB">
        <authorList>
            <person name="Kieselbach T."/>
            <person name="Pettersson U."/>
            <person name="Bystedt M."/>
            <person name="Schroeder W.P."/>
        </authorList>
    </citation>
    <scope>PROTEIN SEQUENCE</scope>
</reference>
<organism>
    <name type="scientific">Spinacia oleracea</name>
    <name type="common">Spinach</name>
    <dbReference type="NCBI Taxonomy" id="3562"/>
    <lineage>
        <taxon>Eukaryota</taxon>
        <taxon>Viridiplantae</taxon>
        <taxon>Streptophyta</taxon>
        <taxon>Embryophyta</taxon>
        <taxon>Tracheophyta</taxon>
        <taxon>Spermatophyta</taxon>
        <taxon>Magnoliopsida</taxon>
        <taxon>eudicotyledons</taxon>
        <taxon>Gunneridae</taxon>
        <taxon>Pentapetalae</taxon>
        <taxon>Caryophyllales</taxon>
        <taxon>Chenopodiaceae</taxon>
        <taxon>Chenopodioideae</taxon>
        <taxon>Anserineae</taxon>
        <taxon>Spinacia</taxon>
    </lineage>
</organism>
<protein>
    <recommendedName>
        <fullName>Thylakoid lumenal 9 kDa protein</fullName>
    </recommendedName>
    <alternativeName>
        <fullName>P9</fullName>
    </alternativeName>
</protein>
<accession>P82671</accession>
<sequence>GFLSGSTGIEXIPGPQL</sequence>
<name>TL09_SPIOL</name>
<comment type="subcellular location">
    <subcellularLocation>
        <location>Plastid</location>
        <location>Chloroplast thylakoid lumen</location>
    </subcellularLocation>
</comment>
<feature type="chain" id="PRO_0000072553" description="Thylakoid lumenal 9 kDa protein">
    <location>
        <begin position="1"/>
        <end position="17" status="greater than"/>
    </location>
</feature>
<feature type="non-terminal residue">
    <location>
        <position position="17"/>
    </location>
</feature>
<proteinExistence type="evidence at protein level"/>
<keyword id="KW-0150">Chloroplast</keyword>
<keyword id="KW-0903">Direct protein sequencing</keyword>
<keyword id="KW-0934">Plastid</keyword>
<keyword id="KW-1185">Reference proteome</keyword>
<keyword id="KW-0793">Thylakoid</keyword>
<dbReference type="Proteomes" id="UP001155700">
    <property type="component" value="Unplaced"/>
</dbReference>
<dbReference type="GO" id="GO:0009543">
    <property type="term" value="C:chloroplast thylakoid lumen"/>
    <property type="evidence" value="ECO:0007669"/>
    <property type="project" value="UniProtKB-SubCell"/>
</dbReference>